<proteinExistence type="evidence at protein level"/>
<sequence>MALGSENHSVFNDDEESSSAFNGPSVIRRNARERNRVKQVNNGFSQLRQHIPAAVIADLSNGRRGIGPGANKKLSKVSTLKMAVEYIRRLQKVLHENDQQKQKQLHLQQQHLHFQQQQQHQHLYAWHQELQLQSPTGSTSSCNSISSYCKPATSTIPGATPPNNFHTKLEASFEDYRNNSCSSGTEDEDILDYISLWQDDL</sequence>
<protein>
    <recommendedName>
        <fullName>Achaete-scute complex protein T5</fullName>
    </recommendedName>
    <alternativeName>
        <fullName>Protein achaete</fullName>
    </alternativeName>
</protein>
<feature type="chain" id="PRO_0000127137" description="Achaete-scute complex protein T5">
    <location>
        <begin position="1"/>
        <end position="201"/>
    </location>
</feature>
<feature type="domain" description="bHLH" evidence="1">
    <location>
        <begin position="24"/>
        <end position="90"/>
    </location>
</feature>
<feature type="region of interest" description="Disordered" evidence="2">
    <location>
        <begin position="1"/>
        <end position="32"/>
    </location>
</feature>
<feature type="compositionally biased region" description="Polar residues" evidence="2">
    <location>
        <begin position="1"/>
        <end position="10"/>
    </location>
</feature>
<comment type="function">
    <text>AS-C proteins are involved in the determination of the neuronal precursors in the peripheral nervous system and the central nervous system.</text>
</comment>
<comment type="subunit">
    <text>Efficient DNA binding requires dimerization with another bHLH protein.</text>
</comment>
<comment type="interaction">
    <interactant intactId="EBI-152748">
        <id>P10083</id>
    </interactant>
    <interactant intactId="EBI-119159">
        <id>Q01070</id>
        <label>E(spl)mgamma-HLH</label>
    </interactant>
    <organismsDiffer>false</organismsDiffer>
    <experiments>3</experiments>
</comment>
<comment type="tissue specificity">
    <text>L(1)SC, SC and AC strongly label the presumptive stomatogastric nervous system, while ASE is more prominent in the presumptive procephalic lobe.</text>
</comment>
<name>AST5_DROME</name>
<evidence type="ECO:0000255" key="1">
    <source>
        <dbReference type="PROSITE-ProRule" id="PRU00981"/>
    </source>
</evidence>
<evidence type="ECO:0000256" key="2">
    <source>
        <dbReference type="SAM" id="MobiDB-lite"/>
    </source>
</evidence>
<organism>
    <name type="scientific">Drosophila melanogaster</name>
    <name type="common">Fruit fly</name>
    <dbReference type="NCBI Taxonomy" id="7227"/>
    <lineage>
        <taxon>Eukaryota</taxon>
        <taxon>Metazoa</taxon>
        <taxon>Ecdysozoa</taxon>
        <taxon>Arthropoda</taxon>
        <taxon>Hexapoda</taxon>
        <taxon>Insecta</taxon>
        <taxon>Pterygota</taxon>
        <taxon>Neoptera</taxon>
        <taxon>Endopterygota</taxon>
        <taxon>Diptera</taxon>
        <taxon>Brachycera</taxon>
        <taxon>Muscomorpha</taxon>
        <taxon>Ephydroidea</taxon>
        <taxon>Drosophilidae</taxon>
        <taxon>Drosophila</taxon>
        <taxon>Sophophora</taxon>
    </lineage>
</organism>
<dbReference type="EMBL" id="M17120">
    <property type="protein sequence ID" value="AAA28312.1"/>
    <property type="molecule type" value="Genomic_DNA"/>
</dbReference>
<dbReference type="EMBL" id="AE014298">
    <property type="protein sequence ID" value="AAF45498.1"/>
    <property type="molecule type" value="Genomic_DNA"/>
</dbReference>
<dbReference type="EMBL" id="AL023873">
    <property type="protein sequence ID" value="CAA19641.1"/>
    <property type="molecule type" value="Genomic_DNA"/>
</dbReference>
<dbReference type="EMBL" id="BT022154">
    <property type="protein sequence ID" value="AAY51549.1"/>
    <property type="molecule type" value="mRNA"/>
</dbReference>
<dbReference type="PIR" id="A43731">
    <property type="entry name" value="A43731"/>
</dbReference>
<dbReference type="RefSeq" id="NP_476824.1">
    <property type="nucleotide sequence ID" value="NM_057476.3"/>
</dbReference>
<dbReference type="SMR" id="P10083"/>
<dbReference type="BioGRID" id="57554">
    <property type="interactions" value="38"/>
</dbReference>
<dbReference type="DIP" id="DIP-187N"/>
<dbReference type="FunCoup" id="P10083">
    <property type="interactions" value="13"/>
</dbReference>
<dbReference type="IntAct" id="P10083">
    <property type="interactions" value="17"/>
</dbReference>
<dbReference type="STRING" id="7227.FBpp0070071"/>
<dbReference type="PaxDb" id="7227-FBpp0070071"/>
<dbReference type="DNASU" id="30981"/>
<dbReference type="EnsemblMetazoa" id="FBtr0070072">
    <property type="protein sequence ID" value="FBpp0070071"/>
    <property type="gene ID" value="FBgn0000022"/>
</dbReference>
<dbReference type="GeneID" id="30981"/>
<dbReference type="KEGG" id="dme:Dmel_CG3796"/>
<dbReference type="AGR" id="FB:FBgn0000022"/>
<dbReference type="CTD" id="11358"/>
<dbReference type="FlyBase" id="FBgn0000022">
    <property type="gene designation" value="ac"/>
</dbReference>
<dbReference type="VEuPathDB" id="VectorBase:FBgn0000022"/>
<dbReference type="eggNOG" id="KOG4029">
    <property type="taxonomic scope" value="Eukaryota"/>
</dbReference>
<dbReference type="GeneTree" id="ENSGT00940000172534"/>
<dbReference type="HOGENOM" id="CLU_063523_1_0_1"/>
<dbReference type="InParanoid" id="P10083"/>
<dbReference type="OMA" id="QHFYAWQ"/>
<dbReference type="OrthoDB" id="5976910at2759"/>
<dbReference type="PhylomeDB" id="P10083"/>
<dbReference type="SignaLink" id="P10083"/>
<dbReference type="BioGRID-ORCS" id="30981">
    <property type="hits" value="0 hits in 3 CRISPR screens"/>
</dbReference>
<dbReference type="GenomeRNAi" id="30981"/>
<dbReference type="PRO" id="PR:P10083"/>
<dbReference type="Proteomes" id="UP000000803">
    <property type="component" value="Chromosome X"/>
</dbReference>
<dbReference type="Bgee" id="FBgn0000022">
    <property type="expression patterns" value="Expressed in stage 1 neuroblast (Drosophila) and 23 other cell types or tissues"/>
</dbReference>
<dbReference type="GO" id="GO:0005634">
    <property type="term" value="C:nucleus"/>
    <property type="evidence" value="ECO:0000314"/>
    <property type="project" value="FlyBase"/>
</dbReference>
<dbReference type="GO" id="GO:0090575">
    <property type="term" value="C:RNA polymerase II transcription regulator complex"/>
    <property type="evidence" value="ECO:0000318"/>
    <property type="project" value="GO_Central"/>
</dbReference>
<dbReference type="GO" id="GO:0005667">
    <property type="term" value="C:transcription regulator complex"/>
    <property type="evidence" value="ECO:0000353"/>
    <property type="project" value="FlyBase"/>
</dbReference>
<dbReference type="GO" id="GO:0003677">
    <property type="term" value="F:DNA binding"/>
    <property type="evidence" value="ECO:0000304"/>
    <property type="project" value="FlyBase"/>
</dbReference>
<dbReference type="GO" id="GO:0003700">
    <property type="term" value="F:DNA-binding transcription factor activity"/>
    <property type="evidence" value="ECO:0000250"/>
    <property type="project" value="FlyBase"/>
</dbReference>
<dbReference type="GO" id="GO:0000981">
    <property type="term" value="F:DNA-binding transcription factor activity, RNA polymerase II-specific"/>
    <property type="evidence" value="ECO:0000318"/>
    <property type="project" value="GO_Central"/>
</dbReference>
<dbReference type="GO" id="GO:0046982">
    <property type="term" value="F:protein heterodimerization activity"/>
    <property type="evidence" value="ECO:0000353"/>
    <property type="project" value="FlyBase"/>
</dbReference>
<dbReference type="GO" id="GO:0000977">
    <property type="term" value="F:RNA polymerase II transcription regulatory region sequence-specific DNA binding"/>
    <property type="evidence" value="ECO:0000318"/>
    <property type="project" value="GO_Central"/>
</dbReference>
<dbReference type="GO" id="GO:0043565">
    <property type="term" value="F:sequence-specific DNA binding"/>
    <property type="evidence" value="ECO:0000314"/>
    <property type="project" value="FlyBase"/>
</dbReference>
<dbReference type="GO" id="GO:0007417">
    <property type="term" value="P:central nervous system development"/>
    <property type="evidence" value="ECO:0000304"/>
    <property type="project" value="FlyBase"/>
</dbReference>
<dbReference type="GO" id="GO:0008407">
    <property type="term" value="P:chaeta morphogenesis"/>
    <property type="evidence" value="ECO:0000315"/>
    <property type="project" value="FlyBase"/>
</dbReference>
<dbReference type="GO" id="GO:0061331">
    <property type="term" value="P:epithelial cell proliferation involved in Malpighian tubule morphogenesis"/>
    <property type="evidence" value="ECO:0000315"/>
    <property type="project" value="FlyBase"/>
</dbReference>
<dbReference type="GO" id="GO:0061382">
    <property type="term" value="P:Malpighian tubule tip cell differentiation"/>
    <property type="evidence" value="ECO:0000315"/>
    <property type="project" value="FlyBase"/>
</dbReference>
<dbReference type="GO" id="GO:0007399">
    <property type="term" value="P:nervous system development"/>
    <property type="evidence" value="ECO:0000304"/>
    <property type="project" value="FlyBase"/>
</dbReference>
<dbReference type="GO" id="GO:0007400">
    <property type="term" value="P:neuroblast fate determination"/>
    <property type="evidence" value="ECO:0000304"/>
    <property type="project" value="FlyBase"/>
</dbReference>
<dbReference type="GO" id="GO:0007422">
    <property type="term" value="P:peripheral nervous system development"/>
    <property type="evidence" value="ECO:0000315"/>
    <property type="project" value="FlyBase"/>
</dbReference>
<dbReference type="GO" id="GO:0006963">
    <property type="term" value="P:positive regulation of antibacterial peptide biosynthetic process"/>
    <property type="evidence" value="ECO:0000315"/>
    <property type="project" value="FlyBase"/>
</dbReference>
<dbReference type="GO" id="GO:0045944">
    <property type="term" value="P:positive regulation of transcription by RNA polymerase II"/>
    <property type="evidence" value="ECO:0000318"/>
    <property type="project" value="GO_Central"/>
</dbReference>
<dbReference type="GO" id="GO:0006355">
    <property type="term" value="P:regulation of DNA-templated transcription"/>
    <property type="evidence" value="ECO:0000250"/>
    <property type="project" value="FlyBase"/>
</dbReference>
<dbReference type="GO" id="GO:0007346">
    <property type="term" value="P:regulation of mitotic cell cycle"/>
    <property type="evidence" value="ECO:0000304"/>
    <property type="project" value="FlyBase"/>
</dbReference>
<dbReference type="GO" id="GO:0007423">
    <property type="term" value="P:sensory organ development"/>
    <property type="evidence" value="ECO:0000315"/>
    <property type="project" value="FlyBase"/>
</dbReference>
<dbReference type="GO" id="GO:0007419">
    <property type="term" value="P:ventral cord development"/>
    <property type="evidence" value="ECO:0000303"/>
    <property type="project" value="FlyBase"/>
</dbReference>
<dbReference type="CDD" id="cd19744">
    <property type="entry name" value="bHLH_TS_dAS-C_like"/>
    <property type="match status" value="1"/>
</dbReference>
<dbReference type="Gene3D" id="4.10.280.10">
    <property type="entry name" value="Helix-loop-helix DNA-binding domain"/>
    <property type="match status" value="1"/>
</dbReference>
<dbReference type="InterPro" id="IPR011598">
    <property type="entry name" value="bHLH_dom"/>
</dbReference>
<dbReference type="InterPro" id="IPR036638">
    <property type="entry name" value="HLH_DNA-bd_sf"/>
</dbReference>
<dbReference type="InterPro" id="IPR015660">
    <property type="entry name" value="MASH1/Ascl1a-like"/>
</dbReference>
<dbReference type="PANTHER" id="PTHR13935:SF106">
    <property type="entry name" value="ACHAETE-SCUTE COMPLEX PROTEIN T5-RELATED"/>
    <property type="match status" value="1"/>
</dbReference>
<dbReference type="PANTHER" id="PTHR13935">
    <property type="entry name" value="ACHAETE-SCUTE TRANSCRIPTION FACTOR-RELATED"/>
    <property type="match status" value="1"/>
</dbReference>
<dbReference type="Pfam" id="PF00010">
    <property type="entry name" value="HLH"/>
    <property type="match status" value="1"/>
</dbReference>
<dbReference type="SMART" id="SM00353">
    <property type="entry name" value="HLH"/>
    <property type="match status" value="1"/>
</dbReference>
<dbReference type="SUPFAM" id="SSF47459">
    <property type="entry name" value="HLH, helix-loop-helix DNA-binding domain"/>
    <property type="match status" value="1"/>
</dbReference>
<dbReference type="PROSITE" id="PS50888">
    <property type="entry name" value="BHLH"/>
    <property type="match status" value="1"/>
</dbReference>
<gene>
    <name type="primary">ac</name>
    <name type="synonym">T5</name>
    <name type="ORF">CG3796</name>
</gene>
<reference key="1">
    <citation type="journal article" date="1987" name="Cell">
        <title>The achaete-scute gene complex of D. melanogaster: conserved domains in a subset of genes required for neurogenesis and their homology to myc.</title>
        <authorList>
            <person name="Villares R."/>
            <person name="Cabrera C.V."/>
        </authorList>
    </citation>
    <scope>NUCLEOTIDE SEQUENCE [GENOMIC DNA]</scope>
    <source>
        <strain>Canton-S</strain>
    </source>
</reference>
<reference key="2">
    <citation type="journal article" date="2000" name="Science">
        <title>The genome sequence of Drosophila melanogaster.</title>
        <authorList>
            <person name="Adams M.D."/>
            <person name="Celniker S.E."/>
            <person name="Holt R.A."/>
            <person name="Evans C.A."/>
            <person name="Gocayne J.D."/>
            <person name="Amanatides P.G."/>
            <person name="Scherer S.E."/>
            <person name="Li P.W."/>
            <person name="Hoskins R.A."/>
            <person name="Galle R.F."/>
            <person name="George R.A."/>
            <person name="Lewis S.E."/>
            <person name="Richards S."/>
            <person name="Ashburner M."/>
            <person name="Henderson S.N."/>
            <person name="Sutton G.G."/>
            <person name="Wortman J.R."/>
            <person name="Yandell M.D."/>
            <person name="Zhang Q."/>
            <person name="Chen L.X."/>
            <person name="Brandon R.C."/>
            <person name="Rogers Y.-H.C."/>
            <person name="Blazej R.G."/>
            <person name="Champe M."/>
            <person name="Pfeiffer B.D."/>
            <person name="Wan K.H."/>
            <person name="Doyle C."/>
            <person name="Baxter E.G."/>
            <person name="Helt G."/>
            <person name="Nelson C.R."/>
            <person name="Miklos G.L.G."/>
            <person name="Abril J.F."/>
            <person name="Agbayani A."/>
            <person name="An H.-J."/>
            <person name="Andrews-Pfannkoch C."/>
            <person name="Baldwin D."/>
            <person name="Ballew R.M."/>
            <person name="Basu A."/>
            <person name="Baxendale J."/>
            <person name="Bayraktaroglu L."/>
            <person name="Beasley E.M."/>
            <person name="Beeson K.Y."/>
            <person name="Benos P.V."/>
            <person name="Berman B.P."/>
            <person name="Bhandari D."/>
            <person name="Bolshakov S."/>
            <person name="Borkova D."/>
            <person name="Botchan M.R."/>
            <person name="Bouck J."/>
            <person name="Brokstein P."/>
            <person name="Brottier P."/>
            <person name="Burtis K.C."/>
            <person name="Busam D.A."/>
            <person name="Butler H."/>
            <person name="Cadieu E."/>
            <person name="Center A."/>
            <person name="Chandra I."/>
            <person name="Cherry J.M."/>
            <person name="Cawley S."/>
            <person name="Dahlke C."/>
            <person name="Davenport L.B."/>
            <person name="Davies P."/>
            <person name="de Pablos B."/>
            <person name="Delcher A."/>
            <person name="Deng Z."/>
            <person name="Mays A.D."/>
            <person name="Dew I."/>
            <person name="Dietz S.M."/>
            <person name="Dodson K."/>
            <person name="Doup L.E."/>
            <person name="Downes M."/>
            <person name="Dugan-Rocha S."/>
            <person name="Dunkov B.C."/>
            <person name="Dunn P."/>
            <person name="Durbin K.J."/>
            <person name="Evangelista C.C."/>
            <person name="Ferraz C."/>
            <person name="Ferriera S."/>
            <person name="Fleischmann W."/>
            <person name="Fosler C."/>
            <person name="Gabrielian A.E."/>
            <person name="Garg N.S."/>
            <person name="Gelbart W.M."/>
            <person name="Glasser K."/>
            <person name="Glodek A."/>
            <person name="Gong F."/>
            <person name="Gorrell J.H."/>
            <person name="Gu Z."/>
            <person name="Guan P."/>
            <person name="Harris M."/>
            <person name="Harris N.L."/>
            <person name="Harvey D.A."/>
            <person name="Heiman T.J."/>
            <person name="Hernandez J.R."/>
            <person name="Houck J."/>
            <person name="Hostin D."/>
            <person name="Houston K.A."/>
            <person name="Howland T.J."/>
            <person name="Wei M.-H."/>
            <person name="Ibegwam C."/>
            <person name="Jalali M."/>
            <person name="Kalush F."/>
            <person name="Karpen G.H."/>
            <person name="Ke Z."/>
            <person name="Kennison J.A."/>
            <person name="Ketchum K.A."/>
            <person name="Kimmel B.E."/>
            <person name="Kodira C.D."/>
            <person name="Kraft C.L."/>
            <person name="Kravitz S."/>
            <person name="Kulp D."/>
            <person name="Lai Z."/>
            <person name="Lasko P."/>
            <person name="Lei Y."/>
            <person name="Levitsky A.A."/>
            <person name="Li J.H."/>
            <person name="Li Z."/>
            <person name="Liang Y."/>
            <person name="Lin X."/>
            <person name="Liu X."/>
            <person name="Mattei B."/>
            <person name="McIntosh T.C."/>
            <person name="McLeod M.P."/>
            <person name="McPherson D."/>
            <person name="Merkulov G."/>
            <person name="Milshina N.V."/>
            <person name="Mobarry C."/>
            <person name="Morris J."/>
            <person name="Moshrefi A."/>
            <person name="Mount S.M."/>
            <person name="Moy M."/>
            <person name="Murphy B."/>
            <person name="Murphy L."/>
            <person name="Muzny D.M."/>
            <person name="Nelson D.L."/>
            <person name="Nelson D.R."/>
            <person name="Nelson K.A."/>
            <person name="Nixon K."/>
            <person name="Nusskern D.R."/>
            <person name="Pacleb J.M."/>
            <person name="Palazzolo M."/>
            <person name="Pittman G.S."/>
            <person name="Pan S."/>
            <person name="Pollard J."/>
            <person name="Puri V."/>
            <person name="Reese M.G."/>
            <person name="Reinert K."/>
            <person name="Remington K."/>
            <person name="Saunders R.D.C."/>
            <person name="Scheeler F."/>
            <person name="Shen H."/>
            <person name="Shue B.C."/>
            <person name="Siden-Kiamos I."/>
            <person name="Simpson M."/>
            <person name="Skupski M.P."/>
            <person name="Smith T.J."/>
            <person name="Spier E."/>
            <person name="Spradling A.C."/>
            <person name="Stapleton M."/>
            <person name="Strong R."/>
            <person name="Sun E."/>
            <person name="Svirskas R."/>
            <person name="Tector C."/>
            <person name="Turner R."/>
            <person name="Venter E."/>
            <person name="Wang A.H."/>
            <person name="Wang X."/>
            <person name="Wang Z.-Y."/>
            <person name="Wassarman D.A."/>
            <person name="Weinstock G.M."/>
            <person name="Weissenbach J."/>
            <person name="Williams S.M."/>
            <person name="Woodage T."/>
            <person name="Worley K.C."/>
            <person name="Wu D."/>
            <person name="Yang S."/>
            <person name="Yao Q.A."/>
            <person name="Ye J."/>
            <person name="Yeh R.-F."/>
            <person name="Zaveri J.S."/>
            <person name="Zhan M."/>
            <person name="Zhang G."/>
            <person name="Zhao Q."/>
            <person name="Zheng L."/>
            <person name="Zheng X.H."/>
            <person name="Zhong F.N."/>
            <person name="Zhong W."/>
            <person name="Zhou X."/>
            <person name="Zhu S.C."/>
            <person name="Zhu X."/>
            <person name="Smith H.O."/>
            <person name="Gibbs R.A."/>
            <person name="Myers E.W."/>
            <person name="Rubin G.M."/>
            <person name="Venter J.C."/>
        </authorList>
    </citation>
    <scope>NUCLEOTIDE SEQUENCE [LARGE SCALE GENOMIC DNA]</scope>
    <source>
        <strain>Berkeley</strain>
    </source>
</reference>
<reference key="3">
    <citation type="journal article" date="2002" name="Genome Biol.">
        <title>Annotation of the Drosophila melanogaster euchromatic genome: a systematic review.</title>
        <authorList>
            <person name="Misra S."/>
            <person name="Crosby M.A."/>
            <person name="Mungall C.J."/>
            <person name="Matthews B.B."/>
            <person name="Campbell K.S."/>
            <person name="Hradecky P."/>
            <person name="Huang Y."/>
            <person name="Kaminker J.S."/>
            <person name="Millburn G.H."/>
            <person name="Prochnik S.E."/>
            <person name="Smith C.D."/>
            <person name="Tupy J.L."/>
            <person name="Whitfield E.J."/>
            <person name="Bayraktaroglu L."/>
            <person name="Berman B.P."/>
            <person name="Bettencourt B.R."/>
            <person name="Celniker S.E."/>
            <person name="de Grey A.D.N.J."/>
            <person name="Drysdale R.A."/>
            <person name="Harris N.L."/>
            <person name="Richter J."/>
            <person name="Russo S."/>
            <person name="Schroeder A.J."/>
            <person name="Shu S.Q."/>
            <person name="Stapleton M."/>
            <person name="Yamada C."/>
            <person name="Ashburner M."/>
            <person name="Gelbart W.M."/>
            <person name="Rubin G.M."/>
            <person name="Lewis S.E."/>
        </authorList>
    </citation>
    <scope>GENOME REANNOTATION</scope>
    <source>
        <strain>Berkeley</strain>
    </source>
</reference>
<reference key="4">
    <citation type="journal article" date="2000" name="Science">
        <title>From sequence to chromosome: the tip of the X chromosome of D. melanogaster.</title>
        <authorList>
            <person name="Benos P.V."/>
            <person name="Gatt M.K."/>
            <person name="Ashburner M."/>
            <person name="Murphy L."/>
            <person name="Harris D."/>
            <person name="Barrell B.G."/>
            <person name="Ferraz C."/>
            <person name="Vidal S."/>
            <person name="Brun C."/>
            <person name="Demailles J."/>
            <person name="Cadieu E."/>
            <person name="Dreano S."/>
            <person name="Gloux S."/>
            <person name="Lelaure V."/>
            <person name="Mottier S."/>
            <person name="Galibert F."/>
            <person name="Borkova D."/>
            <person name="Minana B."/>
            <person name="Kafatos F.C."/>
            <person name="Louis C."/>
            <person name="Siden-Kiamos I."/>
            <person name="Bolshakov S."/>
            <person name="Papagiannakis G."/>
            <person name="Spanos L."/>
            <person name="Cox S."/>
            <person name="Madueno E."/>
            <person name="de Pablos B."/>
            <person name="Modolell J."/>
            <person name="Peter A."/>
            <person name="Schoettler P."/>
            <person name="Werner M."/>
            <person name="Mourkioti F."/>
            <person name="Beinert N."/>
            <person name="Dowe G."/>
            <person name="Schaefer U."/>
            <person name="Jaeckle H."/>
            <person name="Bucheton A."/>
            <person name="Callister D.M."/>
            <person name="Campbell L.A."/>
            <person name="Darlamitsou A."/>
            <person name="Henderson N.S."/>
            <person name="McMillan P.J."/>
            <person name="Salles C."/>
            <person name="Tait E.A."/>
            <person name="Valenti P."/>
            <person name="Saunders R.D.C."/>
            <person name="Glover D.M."/>
        </authorList>
    </citation>
    <scope>NUCLEOTIDE SEQUENCE [LARGE SCALE GENOMIC DNA]</scope>
    <source>
        <strain>Oregon-R</strain>
    </source>
</reference>
<reference key="5">
    <citation type="submission" date="2005-08" db="EMBL/GenBank/DDBJ databases">
        <authorList>
            <person name="Stapleton M."/>
            <person name="Carlson J.W."/>
            <person name="Chavez C."/>
            <person name="Frise E."/>
            <person name="George R.A."/>
            <person name="Pacleb J.W."/>
            <person name="Park S."/>
            <person name="Wan K.H."/>
            <person name="Yu C."/>
            <person name="Celniker S.E."/>
        </authorList>
    </citation>
    <scope>NUCLEOTIDE SEQUENCE [LARGE SCALE MRNA]</scope>
    <source>
        <strain>Berkeley</strain>
    </source>
</reference>
<accession>P10083</accession>
<accession>Q4V702</accession>
<accession>Q9W5G4</accession>
<keyword id="KW-0217">Developmental protein</keyword>
<keyword id="KW-0221">Differentiation</keyword>
<keyword id="KW-0238">DNA-binding</keyword>
<keyword id="KW-0524">Neurogenesis</keyword>
<keyword id="KW-1185">Reference proteome</keyword>